<comment type="function">
    <text evidence="1">Mitochondrial intermembrane chaperone that participates in the import and insertion of some multi-pass transmembrane proteins into the mitochondrial inner membrane. Also required for the transfer of beta-barrel precursors from the TOM complex to the sorting and assembly machinery (SAM complex) of the outer membrane. Acts as a chaperone-like protein that protects the hydrophobic precursors from aggregation and guide them through the mitochondrial intermembrane space. The TIMM8-TIMM13 complex mediates the import of some proteins while the predominant TIMM9-TIMM10 70 kDa complex mediates the import of much more proteins (By similarity).</text>
</comment>
<comment type="subunit">
    <text evidence="1">Heterohexamer; composed of 3 copies of TIMM8A and 3 copies of TIMM13, named soluble 70 kDa complex. Associates with the TIM22 complex, whose core is composed of TIMM22 (By similarity).</text>
</comment>
<comment type="subcellular location">
    <subcellularLocation>
        <location evidence="1">Mitochondrion inner membrane</location>
        <topology evidence="1">Peripheral membrane protein</topology>
        <orientation evidence="1">Intermembrane side</orientation>
    </subcellularLocation>
</comment>
<comment type="domain">
    <text evidence="1">The twin CX3C motif contains 4 conserved Cys residues that form 2 disulfide bonds in the mitochondrial intermembrane space. However, during the transit of TIMM8A from cytoplasm into mitochondrion, the Cys residues probably coordinate zinc, thereby preventing folding and allowing its transfer across mitochondrial outer membrane (By similarity).</text>
</comment>
<comment type="similarity">
    <text evidence="2">Belongs to the small Tim family.</text>
</comment>
<accession>Q90YI5</accession>
<protein>
    <recommendedName>
        <fullName>Mitochondrial import inner membrane translocase subunit Tim8 A</fullName>
    </recommendedName>
</protein>
<dbReference type="EMBL" id="AJ290422">
    <property type="protein sequence ID" value="CAC44629.1"/>
    <property type="molecule type" value="Genomic_DNA"/>
</dbReference>
<dbReference type="RefSeq" id="XP_003970610.1">
    <property type="nucleotide sequence ID" value="XM_003970561.3"/>
</dbReference>
<dbReference type="SMR" id="Q90YI5"/>
<dbReference type="FunCoup" id="Q90YI5">
    <property type="interactions" value="978"/>
</dbReference>
<dbReference type="STRING" id="31033.ENSTRUP00000066404"/>
<dbReference type="GeneID" id="101061507"/>
<dbReference type="KEGG" id="tru:101061507"/>
<dbReference type="CTD" id="1678"/>
<dbReference type="eggNOG" id="KOG3489">
    <property type="taxonomic scope" value="Eukaryota"/>
</dbReference>
<dbReference type="HOGENOM" id="CLU_141397_1_2_1"/>
<dbReference type="InParanoid" id="Q90YI5"/>
<dbReference type="OrthoDB" id="344165at2759"/>
<dbReference type="TreeFam" id="TF106191"/>
<dbReference type="Proteomes" id="UP000005226">
    <property type="component" value="Unplaced"/>
</dbReference>
<dbReference type="GO" id="GO:0005743">
    <property type="term" value="C:mitochondrial inner membrane"/>
    <property type="evidence" value="ECO:0007669"/>
    <property type="project" value="UniProtKB-SubCell"/>
</dbReference>
<dbReference type="GO" id="GO:0046872">
    <property type="term" value="F:metal ion binding"/>
    <property type="evidence" value="ECO:0007669"/>
    <property type="project" value="UniProtKB-KW"/>
</dbReference>
<dbReference type="GO" id="GO:0015031">
    <property type="term" value="P:protein transport"/>
    <property type="evidence" value="ECO:0007669"/>
    <property type="project" value="UniProtKB-KW"/>
</dbReference>
<dbReference type="FunFam" id="1.10.287.810:FF:000003">
    <property type="entry name" value="Mitochondrial import inner membrane translocase subunit TIM8"/>
    <property type="match status" value="1"/>
</dbReference>
<dbReference type="Gene3D" id="1.10.287.810">
    <property type="entry name" value="Mitochondrial import inner membrane translocase subunit tim13 like domains"/>
    <property type="match status" value="1"/>
</dbReference>
<dbReference type="InterPro" id="IPR004217">
    <property type="entry name" value="Tim10-like"/>
</dbReference>
<dbReference type="InterPro" id="IPR035427">
    <property type="entry name" value="Tim10-like_dom_sf"/>
</dbReference>
<dbReference type="Pfam" id="PF02953">
    <property type="entry name" value="zf-Tim10_DDP"/>
    <property type="match status" value="1"/>
</dbReference>
<dbReference type="SUPFAM" id="SSF144122">
    <property type="entry name" value="Tim10-like"/>
    <property type="match status" value="1"/>
</dbReference>
<feature type="chain" id="PRO_0000228023" description="Mitochondrial import inner membrane translocase subunit Tim8 A">
    <location>
        <begin position="1"/>
        <end position="90"/>
    </location>
</feature>
<feature type="short sequence motif" description="Twin CX3C motif">
    <location>
        <begin position="36"/>
        <end position="59"/>
    </location>
</feature>
<feature type="disulfide bond" evidence="1">
    <location>
        <begin position="36"/>
        <end position="59"/>
    </location>
</feature>
<feature type="disulfide bond" evidence="1">
    <location>
        <begin position="40"/>
        <end position="55"/>
    </location>
</feature>
<keyword id="KW-0143">Chaperone</keyword>
<keyword id="KW-1015">Disulfide bond</keyword>
<keyword id="KW-0472">Membrane</keyword>
<keyword id="KW-0479">Metal-binding</keyword>
<keyword id="KW-0496">Mitochondrion</keyword>
<keyword id="KW-0999">Mitochondrion inner membrane</keyword>
<keyword id="KW-0653">Protein transport</keyword>
<keyword id="KW-1185">Reference proteome</keyword>
<keyword id="KW-0811">Translocation</keyword>
<keyword id="KW-0813">Transport</keyword>
<keyword id="KW-0862">Zinc</keyword>
<sequence>MNGQGASADPQLQQFIEIESQKQRFQQLVHHMTEVCWDKCMDKPGPKLDSRAEMCFVNCVERFIDTSQFILNRLEQTQRSKGSFSETMTD</sequence>
<name>TIM8A_TAKRU</name>
<organism>
    <name type="scientific">Takifugu rubripes</name>
    <name type="common">Japanese pufferfish</name>
    <name type="synonym">Fugu rubripes</name>
    <dbReference type="NCBI Taxonomy" id="31033"/>
    <lineage>
        <taxon>Eukaryota</taxon>
        <taxon>Metazoa</taxon>
        <taxon>Chordata</taxon>
        <taxon>Craniata</taxon>
        <taxon>Vertebrata</taxon>
        <taxon>Euteleostomi</taxon>
        <taxon>Actinopterygii</taxon>
        <taxon>Neopterygii</taxon>
        <taxon>Teleostei</taxon>
        <taxon>Neoteleostei</taxon>
        <taxon>Acanthomorphata</taxon>
        <taxon>Eupercaria</taxon>
        <taxon>Tetraodontiformes</taxon>
        <taxon>Tetradontoidea</taxon>
        <taxon>Tetraodontidae</taxon>
        <taxon>Takifugu</taxon>
    </lineage>
</organism>
<evidence type="ECO:0000250" key="1"/>
<evidence type="ECO:0000305" key="2"/>
<proteinExistence type="inferred from homology"/>
<gene>
    <name type="primary">timm8a</name>
    <name type="synonym">ddp</name>
    <name type="synonym">tim8a</name>
</gene>
<reference key="1">
    <citation type="submission" date="2001-01" db="EMBL/GenBank/DDBJ databases">
        <title>Three way comparative genomic analysis of the BTK locus between man, mouse and Fugu.</title>
        <authorList>
            <person name="Goode D."/>
            <person name="Elgar G."/>
        </authorList>
    </citation>
    <scope>NUCLEOTIDE SEQUENCE [GENOMIC DNA]</scope>
</reference>